<organism>
    <name type="scientific">Bacillus thuringiensis subsp. konkukian (strain 97-27)</name>
    <dbReference type="NCBI Taxonomy" id="281309"/>
    <lineage>
        <taxon>Bacteria</taxon>
        <taxon>Bacillati</taxon>
        <taxon>Bacillota</taxon>
        <taxon>Bacilli</taxon>
        <taxon>Bacillales</taxon>
        <taxon>Bacillaceae</taxon>
        <taxon>Bacillus</taxon>
        <taxon>Bacillus cereus group</taxon>
    </lineage>
</organism>
<sequence length="385" mass="42546">MVKYISILGSTGSIGTSALDVVSAHPEHFKIVGLTANYNIELLEQQIKTFQPRIVSVATKELADTLRTRISTNTKITYGTDGLIAVATHPNSNLVLSSVVGVSGLLPTIEALKAKKDIAIANKETLVAAGHIVTELAKQNGCRLIPVDSEHSAIFQCLNGENNKEIDKLIVTASGGAFRDKTREEMKTLQAKDALKHPNWLMGAKLTIDSATLMNKGFEVMEARWLFDIPYEKIDVMIHKESIIHSLVEFIDGSVIAQLGAPDMRMPIQYAFHYPTRLPSSYEKLNLLEIGSLHFEKPDLEKFPCLQYAYECGKIGGTTPAVLNAANEIANALFLKNEIAFFDIEKTIYKTVEAHHNVKDPSLDAILEADQWARQYANQLLIKKS</sequence>
<accession>Q6HG59</accession>
<name>DXR1_BACHK</name>
<reference key="1">
    <citation type="journal article" date="2006" name="J. Bacteriol.">
        <title>Pathogenomic sequence analysis of Bacillus cereus and Bacillus thuringiensis isolates closely related to Bacillus anthracis.</title>
        <authorList>
            <person name="Han C.S."/>
            <person name="Xie G."/>
            <person name="Challacombe J.F."/>
            <person name="Altherr M.R."/>
            <person name="Bhotika S.S."/>
            <person name="Bruce D."/>
            <person name="Campbell C.S."/>
            <person name="Campbell M.L."/>
            <person name="Chen J."/>
            <person name="Chertkov O."/>
            <person name="Cleland C."/>
            <person name="Dimitrijevic M."/>
            <person name="Doggett N.A."/>
            <person name="Fawcett J.J."/>
            <person name="Glavina T."/>
            <person name="Goodwin L.A."/>
            <person name="Hill K.K."/>
            <person name="Hitchcock P."/>
            <person name="Jackson P.J."/>
            <person name="Keim P."/>
            <person name="Kewalramani A.R."/>
            <person name="Longmire J."/>
            <person name="Lucas S."/>
            <person name="Malfatti S."/>
            <person name="McMurry K."/>
            <person name="Meincke L.J."/>
            <person name="Misra M."/>
            <person name="Moseman B.L."/>
            <person name="Mundt M."/>
            <person name="Munk A.C."/>
            <person name="Okinaka R.T."/>
            <person name="Parson-Quintana B."/>
            <person name="Reilly L.P."/>
            <person name="Richardson P."/>
            <person name="Robinson D.L."/>
            <person name="Rubin E."/>
            <person name="Saunders E."/>
            <person name="Tapia R."/>
            <person name="Tesmer J.G."/>
            <person name="Thayer N."/>
            <person name="Thompson L.S."/>
            <person name="Tice H."/>
            <person name="Ticknor L.O."/>
            <person name="Wills P.L."/>
            <person name="Brettin T.S."/>
            <person name="Gilna P."/>
        </authorList>
    </citation>
    <scope>NUCLEOTIDE SEQUENCE [LARGE SCALE GENOMIC DNA]</scope>
    <source>
        <strain>97-27</strain>
    </source>
</reference>
<proteinExistence type="inferred from homology"/>
<dbReference type="EC" id="1.1.1.267" evidence="1"/>
<dbReference type="EMBL" id="AE017355">
    <property type="protein sequence ID" value="AAT62181.1"/>
    <property type="molecule type" value="Genomic_DNA"/>
</dbReference>
<dbReference type="RefSeq" id="WP_000241803.1">
    <property type="nucleotide sequence ID" value="NC_005957.1"/>
</dbReference>
<dbReference type="RefSeq" id="YP_037467.1">
    <property type="nucleotide sequence ID" value="NC_005957.1"/>
</dbReference>
<dbReference type="SMR" id="Q6HG59"/>
<dbReference type="KEGG" id="btk:BT9727_3144"/>
<dbReference type="PATRIC" id="fig|281309.8.peg.3347"/>
<dbReference type="HOGENOM" id="CLU_035714_4_0_9"/>
<dbReference type="UniPathway" id="UPA00056">
    <property type="reaction ID" value="UER00092"/>
</dbReference>
<dbReference type="Proteomes" id="UP000001301">
    <property type="component" value="Chromosome"/>
</dbReference>
<dbReference type="GO" id="GO:0030604">
    <property type="term" value="F:1-deoxy-D-xylulose-5-phosphate reductoisomerase activity"/>
    <property type="evidence" value="ECO:0007669"/>
    <property type="project" value="UniProtKB-UniRule"/>
</dbReference>
<dbReference type="GO" id="GO:0030145">
    <property type="term" value="F:manganese ion binding"/>
    <property type="evidence" value="ECO:0007669"/>
    <property type="project" value="TreeGrafter"/>
</dbReference>
<dbReference type="GO" id="GO:0070402">
    <property type="term" value="F:NADPH binding"/>
    <property type="evidence" value="ECO:0007669"/>
    <property type="project" value="InterPro"/>
</dbReference>
<dbReference type="GO" id="GO:0051484">
    <property type="term" value="P:isopentenyl diphosphate biosynthetic process, methylerythritol 4-phosphate pathway involved in terpenoid biosynthetic process"/>
    <property type="evidence" value="ECO:0007669"/>
    <property type="project" value="TreeGrafter"/>
</dbReference>
<dbReference type="FunFam" id="3.40.50.720:FF:000045">
    <property type="entry name" value="1-deoxy-D-xylulose 5-phosphate reductoisomerase"/>
    <property type="match status" value="1"/>
</dbReference>
<dbReference type="Gene3D" id="1.10.1740.10">
    <property type="match status" value="1"/>
</dbReference>
<dbReference type="Gene3D" id="3.40.50.720">
    <property type="entry name" value="NAD(P)-binding Rossmann-like Domain"/>
    <property type="match status" value="1"/>
</dbReference>
<dbReference type="HAMAP" id="MF_00183">
    <property type="entry name" value="DXP_reductoisom"/>
    <property type="match status" value="1"/>
</dbReference>
<dbReference type="InterPro" id="IPR003821">
    <property type="entry name" value="DXP_reductoisomerase"/>
</dbReference>
<dbReference type="InterPro" id="IPR013644">
    <property type="entry name" value="DXP_reductoisomerase_C"/>
</dbReference>
<dbReference type="InterPro" id="IPR013512">
    <property type="entry name" value="DXP_reductoisomerase_N"/>
</dbReference>
<dbReference type="InterPro" id="IPR026877">
    <property type="entry name" value="DXPR_C"/>
</dbReference>
<dbReference type="InterPro" id="IPR036169">
    <property type="entry name" value="DXPR_C_sf"/>
</dbReference>
<dbReference type="InterPro" id="IPR036291">
    <property type="entry name" value="NAD(P)-bd_dom_sf"/>
</dbReference>
<dbReference type="NCBIfam" id="TIGR00243">
    <property type="entry name" value="Dxr"/>
    <property type="match status" value="1"/>
</dbReference>
<dbReference type="NCBIfam" id="NF009114">
    <property type="entry name" value="PRK12464.1"/>
    <property type="match status" value="1"/>
</dbReference>
<dbReference type="PANTHER" id="PTHR30525">
    <property type="entry name" value="1-DEOXY-D-XYLULOSE 5-PHOSPHATE REDUCTOISOMERASE"/>
    <property type="match status" value="1"/>
</dbReference>
<dbReference type="PANTHER" id="PTHR30525:SF0">
    <property type="entry name" value="1-DEOXY-D-XYLULOSE 5-PHOSPHATE REDUCTOISOMERASE, CHLOROPLASTIC"/>
    <property type="match status" value="1"/>
</dbReference>
<dbReference type="Pfam" id="PF08436">
    <property type="entry name" value="DXP_redisom_C"/>
    <property type="match status" value="1"/>
</dbReference>
<dbReference type="Pfam" id="PF02670">
    <property type="entry name" value="DXP_reductoisom"/>
    <property type="match status" value="1"/>
</dbReference>
<dbReference type="Pfam" id="PF13288">
    <property type="entry name" value="DXPR_C"/>
    <property type="match status" value="1"/>
</dbReference>
<dbReference type="PIRSF" id="PIRSF006205">
    <property type="entry name" value="Dxp_reductismrs"/>
    <property type="match status" value="1"/>
</dbReference>
<dbReference type="SUPFAM" id="SSF69055">
    <property type="entry name" value="1-deoxy-D-xylulose-5-phosphate reductoisomerase, C-terminal domain"/>
    <property type="match status" value="1"/>
</dbReference>
<dbReference type="SUPFAM" id="SSF55347">
    <property type="entry name" value="Glyceraldehyde-3-phosphate dehydrogenase-like, C-terminal domain"/>
    <property type="match status" value="1"/>
</dbReference>
<dbReference type="SUPFAM" id="SSF51735">
    <property type="entry name" value="NAD(P)-binding Rossmann-fold domains"/>
    <property type="match status" value="1"/>
</dbReference>
<keyword id="KW-0414">Isoprene biosynthesis</keyword>
<keyword id="KW-0464">Manganese</keyword>
<keyword id="KW-0479">Metal-binding</keyword>
<keyword id="KW-0521">NADP</keyword>
<keyword id="KW-0560">Oxidoreductase</keyword>
<evidence type="ECO:0000255" key="1">
    <source>
        <dbReference type="HAMAP-Rule" id="MF_00183"/>
    </source>
</evidence>
<feature type="chain" id="PRO_0000163611" description="1-deoxy-D-xylulose 5-phosphate reductoisomerase 1">
    <location>
        <begin position="1"/>
        <end position="385"/>
    </location>
</feature>
<feature type="binding site" evidence="1">
    <location>
        <position position="11"/>
    </location>
    <ligand>
        <name>NADPH</name>
        <dbReference type="ChEBI" id="CHEBI:57783"/>
    </ligand>
</feature>
<feature type="binding site" evidence="1">
    <location>
        <position position="12"/>
    </location>
    <ligand>
        <name>NADPH</name>
        <dbReference type="ChEBI" id="CHEBI:57783"/>
    </ligand>
</feature>
<feature type="binding site" evidence="1">
    <location>
        <position position="13"/>
    </location>
    <ligand>
        <name>NADPH</name>
        <dbReference type="ChEBI" id="CHEBI:57783"/>
    </ligand>
</feature>
<feature type="binding site" evidence="1">
    <location>
        <position position="14"/>
    </location>
    <ligand>
        <name>NADPH</name>
        <dbReference type="ChEBI" id="CHEBI:57783"/>
    </ligand>
</feature>
<feature type="binding site" evidence="1">
    <location>
        <position position="39"/>
    </location>
    <ligand>
        <name>NADPH</name>
        <dbReference type="ChEBI" id="CHEBI:57783"/>
    </ligand>
</feature>
<feature type="binding site" evidence="1">
    <location>
        <position position="122"/>
    </location>
    <ligand>
        <name>NADPH</name>
        <dbReference type="ChEBI" id="CHEBI:57783"/>
    </ligand>
</feature>
<feature type="binding site" evidence="1">
    <location>
        <position position="123"/>
    </location>
    <ligand>
        <name>1-deoxy-D-xylulose 5-phosphate</name>
        <dbReference type="ChEBI" id="CHEBI:57792"/>
    </ligand>
</feature>
<feature type="binding site" evidence="1">
    <location>
        <position position="124"/>
    </location>
    <ligand>
        <name>NADPH</name>
        <dbReference type="ChEBI" id="CHEBI:57783"/>
    </ligand>
</feature>
<feature type="binding site" evidence="1">
    <location>
        <position position="148"/>
    </location>
    <ligand>
        <name>Mn(2+)</name>
        <dbReference type="ChEBI" id="CHEBI:29035"/>
    </ligand>
</feature>
<feature type="binding site" evidence="1">
    <location>
        <position position="149"/>
    </location>
    <ligand>
        <name>1-deoxy-D-xylulose 5-phosphate</name>
        <dbReference type="ChEBI" id="CHEBI:57792"/>
    </ligand>
</feature>
<feature type="binding site" evidence="1">
    <location>
        <position position="150"/>
    </location>
    <ligand>
        <name>1-deoxy-D-xylulose 5-phosphate</name>
        <dbReference type="ChEBI" id="CHEBI:57792"/>
    </ligand>
</feature>
<feature type="binding site" evidence="1">
    <location>
        <position position="150"/>
    </location>
    <ligand>
        <name>Mn(2+)</name>
        <dbReference type="ChEBI" id="CHEBI:29035"/>
    </ligand>
</feature>
<feature type="binding site" evidence="1">
    <location>
        <position position="174"/>
    </location>
    <ligand>
        <name>1-deoxy-D-xylulose 5-phosphate</name>
        <dbReference type="ChEBI" id="CHEBI:57792"/>
    </ligand>
</feature>
<feature type="binding site" evidence="1">
    <location>
        <position position="197"/>
    </location>
    <ligand>
        <name>1-deoxy-D-xylulose 5-phosphate</name>
        <dbReference type="ChEBI" id="CHEBI:57792"/>
    </ligand>
</feature>
<feature type="binding site" evidence="1">
    <location>
        <position position="203"/>
    </location>
    <ligand>
        <name>NADPH</name>
        <dbReference type="ChEBI" id="CHEBI:57783"/>
    </ligand>
</feature>
<feature type="binding site" evidence="1">
    <location>
        <position position="210"/>
    </location>
    <ligand>
        <name>1-deoxy-D-xylulose 5-phosphate</name>
        <dbReference type="ChEBI" id="CHEBI:57792"/>
    </ligand>
</feature>
<feature type="binding site" evidence="1">
    <location>
        <position position="215"/>
    </location>
    <ligand>
        <name>1-deoxy-D-xylulose 5-phosphate</name>
        <dbReference type="ChEBI" id="CHEBI:57792"/>
    </ligand>
</feature>
<feature type="binding site" evidence="1">
    <location>
        <position position="216"/>
    </location>
    <ligand>
        <name>1-deoxy-D-xylulose 5-phosphate</name>
        <dbReference type="ChEBI" id="CHEBI:57792"/>
    </ligand>
</feature>
<feature type="binding site" evidence="1">
    <location>
        <position position="219"/>
    </location>
    <ligand>
        <name>1-deoxy-D-xylulose 5-phosphate</name>
        <dbReference type="ChEBI" id="CHEBI:57792"/>
    </ligand>
</feature>
<feature type="binding site" evidence="1">
    <location>
        <position position="219"/>
    </location>
    <ligand>
        <name>Mn(2+)</name>
        <dbReference type="ChEBI" id="CHEBI:29035"/>
    </ligand>
</feature>
<protein>
    <recommendedName>
        <fullName evidence="1">1-deoxy-D-xylulose 5-phosphate reductoisomerase 1</fullName>
        <shortName evidence="1">DXP reductoisomerase 1</shortName>
        <ecNumber evidence="1">1.1.1.267</ecNumber>
    </recommendedName>
    <alternativeName>
        <fullName evidence="1">1-deoxyxylulose-5-phosphate reductoisomerase 1</fullName>
    </alternativeName>
    <alternativeName>
        <fullName evidence="1">2-C-methyl-D-erythritol 4-phosphate synthase 1</fullName>
    </alternativeName>
</protein>
<gene>
    <name evidence="1" type="primary">dxr1</name>
    <name type="ordered locus">BT9727_3144</name>
</gene>
<comment type="function">
    <text evidence="1">Catalyzes the NADPH-dependent rearrangement and reduction of 1-deoxy-D-xylulose-5-phosphate (DXP) to 2-C-methyl-D-erythritol 4-phosphate (MEP).</text>
</comment>
<comment type="catalytic activity">
    <reaction evidence="1">
        <text>2-C-methyl-D-erythritol 4-phosphate + NADP(+) = 1-deoxy-D-xylulose 5-phosphate + NADPH + H(+)</text>
        <dbReference type="Rhea" id="RHEA:13717"/>
        <dbReference type="ChEBI" id="CHEBI:15378"/>
        <dbReference type="ChEBI" id="CHEBI:57783"/>
        <dbReference type="ChEBI" id="CHEBI:57792"/>
        <dbReference type="ChEBI" id="CHEBI:58262"/>
        <dbReference type="ChEBI" id="CHEBI:58349"/>
        <dbReference type="EC" id="1.1.1.267"/>
    </reaction>
    <physiologicalReaction direction="right-to-left" evidence="1">
        <dbReference type="Rhea" id="RHEA:13719"/>
    </physiologicalReaction>
</comment>
<comment type="cofactor">
    <cofactor evidence="1">
        <name>Mg(2+)</name>
        <dbReference type="ChEBI" id="CHEBI:18420"/>
    </cofactor>
    <cofactor evidence="1">
        <name>Mn(2+)</name>
        <dbReference type="ChEBI" id="CHEBI:29035"/>
    </cofactor>
</comment>
<comment type="pathway">
    <text evidence="1">Isoprenoid biosynthesis; isopentenyl diphosphate biosynthesis via DXP pathway; isopentenyl diphosphate from 1-deoxy-D-xylulose 5-phosphate: step 1/6.</text>
</comment>
<comment type="similarity">
    <text evidence="1">Belongs to the DXR family.</text>
</comment>